<comment type="function">
    <text evidence="1">Regulator of peptidoglycan synthesis that is essential for the function of penicillin-binding protein 1A (PBP1a).</text>
</comment>
<comment type="subunit">
    <text evidence="1">Interacts with PBP1a.</text>
</comment>
<comment type="subcellular location">
    <subcellularLocation>
        <location evidence="1">Cell outer membrane</location>
        <topology evidence="1">Lipid-anchor</topology>
        <orientation evidence="1">Periplasmic side</orientation>
    </subcellularLocation>
</comment>
<comment type="similarity">
    <text evidence="1">Belongs to the LpoA family.</text>
</comment>
<comment type="sequence caution" evidence="2">
    <conflict type="erroneous initiation">
        <sequence resource="EMBL-CDS" id="ABI25015"/>
    </conflict>
    <text>Extended N-terminus.</text>
</comment>
<feature type="signal peptide" evidence="1">
    <location>
        <begin position="1"/>
        <end position="26"/>
    </location>
</feature>
<feature type="chain" id="PRO_0000405935" description="Penicillin-binding protein activator LpoA">
    <location>
        <begin position="27"/>
        <end position="581"/>
    </location>
</feature>
<feature type="lipid moiety-binding region" description="N-palmitoyl cysteine" evidence="1">
    <location>
        <position position="27"/>
    </location>
</feature>
<feature type="lipid moiety-binding region" description="S-diacylglycerol cysteine" evidence="1">
    <location>
        <position position="27"/>
    </location>
</feature>
<reference key="1">
    <citation type="journal article" date="2007" name="J. Bacteriol.">
        <title>Complete genome sequence of Haemophilus somnus (Histophilus somni) strain 129Pt and comparison to Haemophilus ducreyi 35000HP and Haemophilus influenzae Rd.</title>
        <authorList>
            <person name="Challacombe J.F."/>
            <person name="Duncan A.J."/>
            <person name="Brettin T.S."/>
            <person name="Bruce D."/>
            <person name="Chertkov O."/>
            <person name="Detter J.C."/>
            <person name="Han C.S."/>
            <person name="Misra M."/>
            <person name="Richardson P."/>
            <person name="Tapia R."/>
            <person name="Thayer N."/>
            <person name="Xie G."/>
            <person name="Inzana T.J."/>
        </authorList>
    </citation>
    <scope>NUCLEOTIDE SEQUENCE [LARGE SCALE GENOMIC DNA]</scope>
    <source>
        <strain>129Pt</strain>
    </source>
</reference>
<organism>
    <name type="scientific">Histophilus somni (strain 129Pt)</name>
    <name type="common">Haemophilus somnus</name>
    <dbReference type="NCBI Taxonomy" id="205914"/>
    <lineage>
        <taxon>Bacteria</taxon>
        <taxon>Pseudomonadati</taxon>
        <taxon>Pseudomonadota</taxon>
        <taxon>Gammaproteobacteria</taxon>
        <taxon>Pasteurellales</taxon>
        <taxon>Pasteurellaceae</taxon>
        <taxon>Histophilus</taxon>
    </lineage>
</organism>
<accession>Q0I2P5</accession>
<proteinExistence type="inferred from homology"/>
<keyword id="KW-0998">Cell outer membrane</keyword>
<keyword id="KW-0133">Cell shape</keyword>
<keyword id="KW-0449">Lipoprotein</keyword>
<keyword id="KW-0472">Membrane</keyword>
<keyword id="KW-0564">Palmitate</keyword>
<keyword id="KW-0573">Peptidoglycan synthesis</keyword>
<keyword id="KW-0732">Signal</keyword>
<evidence type="ECO:0000255" key="1">
    <source>
        <dbReference type="HAMAP-Rule" id="MF_01890"/>
    </source>
</evidence>
<evidence type="ECO:0000305" key="2"/>
<gene>
    <name evidence="1" type="primary">lpoA</name>
    <name type="synonym">lppC</name>
    <name type="ordered locus">HS_0740</name>
</gene>
<dbReference type="EMBL" id="CP000436">
    <property type="protein sequence ID" value="ABI25015.1"/>
    <property type="status" value="ALT_INIT"/>
    <property type="molecule type" value="Genomic_DNA"/>
</dbReference>
<dbReference type="SMR" id="Q0I2P5"/>
<dbReference type="KEGG" id="hso:HS_0740"/>
<dbReference type="eggNOG" id="COG3107">
    <property type="taxonomic scope" value="Bacteria"/>
</dbReference>
<dbReference type="HOGENOM" id="CLU_026091_1_1_6"/>
<dbReference type="GO" id="GO:0031241">
    <property type="term" value="C:periplasmic side of cell outer membrane"/>
    <property type="evidence" value="ECO:0007669"/>
    <property type="project" value="UniProtKB-UniRule"/>
</dbReference>
<dbReference type="GO" id="GO:0030234">
    <property type="term" value="F:enzyme regulator activity"/>
    <property type="evidence" value="ECO:0007669"/>
    <property type="project" value="UniProtKB-UniRule"/>
</dbReference>
<dbReference type="GO" id="GO:0009252">
    <property type="term" value="P:peptidoglycan biosynthetic process"/>
    <property type="evidence" value="ECO:0007669"/>
    <property type="project" value="UniProtKB-UniRule"/>
</dbReference>
<dbReference type="GO" id="GO:0008360">
    <property type="term" value="P:regulation of cell shape"/>
    <property type="evidence" value="ECO:0007669"/>
    <property type="project" value="UniProtKB-KW"/>
</dbReference>
<dbReference type="CDD" id="cd06339">
    <property type="entry name" value="PBP1_YraM_LppC_lipoprotein-like"/>
    <property type="match status" value="1"/>
</dbReference>
<dbReference type="Gene3D" id="1.25.40.650">
    <property type="match status" value="1"/>
</dbReference>
<dbReference type="Gene3D" id="3.40.50.2300">
    <property type="match status" value="2"/>
</dbReference>
<dbReference type="Gene3D" id="1.25.40.10">
    <property type="entry name" value="Tetratricopeptide repeat domain"/>
    <property type="match status" value="1"/>
</dbReference>
<dbReference type="HAMAP" id="MF_01890">
    <property type="entry name" value="LpoA"/>
    <property type="match status" value="1"/>
</dbReference>
<dbReference type="InterPro" id="IPR007443">
    <property type="entry name" value="LpoA"/>
</dbReference>
<dbReference type="InterPro" id="IPR028082">
    <property type="entry name" value="Peripla_BP_I"/>
</dbReference>
<dbReference type="InterPro" id="IPR011990">
    <property type="entry name" value="TPR-like_helical_dom_sf"/>
</dbReference>
<dbReference type="PANTHER" id="PTHR38038">
    <property type="entry name" value="PENICILLIN-BINDING PROTEIN ACTIVATOR LPOA"/>
    <property type="match status" value="1"/>
</dbReference>
<dbReference type="PANTHER" id="PTHR38038:SF1">
    <property type="entry name" value="PENICILLIN-BINDING PROTEIN ACTIVATOR LPOA"/>
    <property type="match status" value="1"/>
</dbReference>
<dbReference type="Pfam" id="PF04348">
    <property type="entry name" value="LppC"/>
    <property type="match status" value="1"/>
</dbReference>
<dbReference type="SUPFAM" id="SSF53822">
    <property type="entry name" value="Periplasmic binding protein-like I"/>
    <property type="match status" value="1"/>
</dbReference>
<protein>
    <recommendedName>
        <fullName evidence="1">Penicillin-binding protein activator LpoA</fullName>
        <shortName evidence="1">PBP activator LpoA</shortName>
    </recommendedName>
</protein>
<sequence length="581" mass="65702">MLSILMQGLRLKKCFLPILVMFFLAGCVNLLGSSFTASLKNDANASSDFYIRKIEQTQNQQDLQTYKLLAARVLVTENKIPQAEAYLAELIDLNDEQKLDKSLIEAHISAIKGKNETAEYQLSLIHLTLLSPSQKSRYYEIVSRIAENRHDNISAIKARIQMDNFLSDIQRKQQNNDRTWALLRNTDSEVLNNTDAEGNITLSGWLTLAQLYNDNLNQPAQLIQTLLTWKNYYPTHTAAHLLPTELQGLANFQQTTLTQVGLILPLSGNTRLIGETIKNGFDDAKVNYNVQVHVFDSMKMSIEQIINQAKKQGINTLVGPLLKQNVDVIVNNPYLVQDLNVLALNSTPNARAIEHLCYYGLSPEDEAESAASKMWNDTVRIPLVLVPQNNLGRRTAAAFTLRWQQLLGTDANIKFYNQTADINFALKSGLSESTDGVYIIANNKQLAEIKAVLDNINPTLKLYASSRSNSPNSGPEHRLFLNNLQFSDIPFFKDRESEQYKKIEKMTNNDYSLMHLYAMGYDAWLLINQFNEFRQIPGFTIDGLTGKLSAGPNCNVERDMTWFQYQNGSIYPLNEQDDSII</sequence>
<name>LPOA_HISS1</name>